<comment type="function">
    <text evidence="3">In E.coli extracts under anerobic conditions catalyzes the 6-electron oxidation of protoporphyrinogen IX to form protoporphyrin IX, transferring electrons to fumarate reductase, presumably via menaquinone. In vitro under aerobic conditions forms protoporphyrin IX using ubiquinone as an electron acceptor. Complements an E.coli hemG deletion, allowing normal growth in vivo.</text>
</comment>
<comment type="catalytic activity">
    <reaction evidence="6">
        <text>protoporphyrinogen IX + 3 a menaquinone = protoporphyrin IX + 3 a menaquinol</text>
        <dbReference type="Rhea" id="RHEA:27409"/>
        <dbReference type="Rhea" id="RHEA-COMP:9537"/>
        <dbReference type="Rhea" id="RHEA-COMP:9539"/>
        <dbReference type="ChEBI" id="CHEBI:16374"/>
        <dbReference type="ChEBI" id="CHEBI:18151"/>
        <dbReference type="ChEBI" id="CHEBI:57306"/>
        <dbReference type="ChEBI" id="CHEBI:57307"/>
        <dbReference type="EC" id="1.3.5.3"/>
    </reaction>
</comment>
<comment type="catalytic activity">
    <reaction evidence="3">
        <text>protoporphyrinogen IX + 3 a ubiquinone = protoporphyrin IX + 3 a ubiquinol</text>
        <dbReference type="Rhea" id="RHEA:63936"/>
        <dbReference type="Rhea" id="RHEA-COMP:9565"/>
        <dbReference type="Rhea" id="RHEA-COMP:9566"/>
        <dbReference type="ChEBI" id="CHEBI:16389"/>
        <dbReference type="ChEBI" id="CHEBI:17976"/>
        <dbReference type="ChEBI" id="CHEBI:57306"/>
        <dbReference type="ChEBI" id="CHEBI:57307"/>
    </reaction>
</comment>
<comment type="catalytic activity">
    <reaction evidence="3">
        <text>protoporphyrinogen IX + 3 a quinone = protoporphyrin IX + 3 a quinol</text>
        <dbReference type="Rhea" id="RHEA:65032"/>
        <dbReference type="ChEBI" id="CHEBI:24646"/>
        <dbReference type="ChEBI" id="CHEBI:57306"/>
        <dbReference type="ChEBI" id="CHEBI:57307"/>
        <dbReference type="ChEBI" id="CHEBI:132124"/>
        <dbReference type="EC" id="1.3.5.3"/>
    </reaction>
</comment>
<comment type="cofactor">
    <cofactor evidence="3">
        <name>FMN</name>
        <dbReference type="ChEBI" id="CHEBI:58210"/>
    </cofactor>
    <text evidence="3">Binds 1 FMN non-covalently per subunit.</text>
</comment>
<comment type="pathway">
    <text evidence="6">Porphyrin-containing compound metabolism; protoporphyrin-IX biosynthesis; protoporphyrin-IX from protoporphyrinogen-IX: step 1/1.</text>
</comment>
<comment type="subcellular location">
    <subcellularLocation>
        <location evidence="2">Membrane</location>
        <topology evidence="2">Single-pass membrane protein</topology>
    </subcellularLocation>
</comment>
<comment type="miscellaneous">
    <text evidence="6">Leishmania is not able to completely synthesize heme; it is thought that the amastigote form localized in macrophages utilizes coproporphyrinogen from the host to produce heme via the successive action of HemF, HemG and HemH.</text>
</comment>
<comment type="similarity">
    <text evidence="5">Belongs to the HemG family.</text>
</comment>
<gene>
    <name evidence="4" type="primary">hemG</name>
    <name type="ORF">LMJF_06_1280</name>
</gene>
<evidence type="ECO:0000250" key="1">
    <source>
        <dbReference type="UniProtKB" id="P0ACB4"/>
    </source>
</evidence>
<evidence type="ECO:0000255" key="2"/>
<evidence type="ECO:0000269" key="3">
    <source>
    </source>
</evidence>
<evidence type="ECO:0000303" key="4">
    <source>
    </source>
</evidence>
<evidence type="ECO:0000305" key="5"/>
<evidence type="ECO:0000305" key="6">
    <source>
    </source>
</evidence>
<accession>Q4QIU7</accession>
<name>HEMG_LEIMA</name>
<protein>
    <recommendedName>
        <fullName evidence="5">Protoporphyrinogen IX dehydrogenase [quinone]</fullName>
        <ecNumber evidence="3">1.3.5.3</ecNumber>
    </recommendedName>
    <alternativeName>
        <fullName evidence="5">Protoporphyrinogen IX dehydrogenase [menaquinone]</fullName>
    </alternativeName>
    <alternativeName>
        <fullName evidence="5">Protoporphyrinogen IX dehydrogenase [ubiquinone]</fullName>
    </alternativeName>
    <alternativeName>
        <fullName evidence="4">Protoporphyrinogen oxidase</fullName>
        <shortName evidence="4">PPO</shortName>
    </alternativeName>
</protein>
<feature type="chain" id="PRO_0000450662" description="Protoporphyrinogen IX dehydrogenase [quinone]">
    <location>
        <begin position="1"/>
        <end position="231"/>
    </location>
</feature>
<feature type="transmembrane region" description="Helical" evidence="2">
    <location>
        <begin position="208"/>
        <end position="228"/>
    </location>
</feature>
<feature type="domain" description="Flavodoxin-like" evidence="1">
    <location>
        <begin position="8"/>
        <end position="178"/>
    </location>
</feature>
<feature type="binding site" evidence="1">
    <location>
        <begin position="14"/>
        <end position="18"/>
    </location>
    <ligand>
        <name>FMN</name>
        <dbReference type="ChEBI" id="CHEBI:58210"/>
    </ligand>
</feature>
<feature type="binding site" evidence="1">
    <location>
        <begin position="90"/>
        <end position="158"/>
    </location>
    <ligand>
        <name>FMN</name>
        <dbReference type="ChEBI" id="CHEBI:58210"/>
    </ligand>
</feature>
<feature type="mutagenesis site" description="Greatly reduced formation of protoporphyrin IX." evidence="3">
    <original>Y</original>
    <variation>F</variation>
    <location>
        <position position="134"/>
    </location>
</feature>
<feature type="mutagenesis site" description="No formation of protoporphyrin IX." evidence="3">
    <original>Y</original>
    <variation>A</variation>
    <variation>F</variation>
    <variation>S</variation>
    <location>
        <position position="137"/>
    </location>
</feature>
<feature type="mutagenesis site" description="Greatly reduced formation of protoporphyrin IX." evidence="3">
    <original>R</original>
    <variation>A</variation>
    <location>
        <position position="142"/>
    </location>
</feature>
<organism>
    <name type="scientific">Leishmania major</name>
    <dbReference type="NCBI Taxonomy" id="5664"/>
    <lineage>
        <taxon>Eukaryota</taxon>
        <taxon>Discoba</taxon>
        <taxon>Euglenozoa</taxon>
        <taxon>Kinetoplastea</taxon>
        <taxon>Metakinetoplastina</taxon>
        <taxon>Trypanosomatida</taxon>
        <taxon>Trypanosomatidae</taxon>
        <taxon>Leishmaniinae</taxon>
        <taxon>Leishmania</taxon>
    </lineage>
</organism>
<proteinExistence type="evidence at protein level"/>
<sequence>MASQSPKCLMLYSTTDGHTKTIMDTIARQLADETKVRCDVVDIKDGNSYVLADYEKVLLGASIRYGHFSAAFINYVKQHHSELSAMPSAFFSVNLTARKLDKNTATTNVYTRKFLNQSSWSPQLVGVFAGALWYPRYNFFDRVLIQFIMKVTGGETDSTKEIVYTDWAAVRRFASDFAALPLAVPPRPKANTVEKPDGILRSGSGAHCLLAIVGMSAAVIVGIRIIAAKRG</sequence>
<dbReference type="EC" id="1.3.5.3" evidence="3"/>
<dbReference type="EMBL" id="KM411732">
    <property type="protein sequence ID" value="AKK31181.1"/>
    <property type="molecule type" value="Genomic_DNA"/>
</dbReference>
<dbReference type="EMBL" id="FR796402">
    <property type="protein sequence ID" value="CAJ02176.1"/>
    <property type="molecule type" value="Genomic_DNA"/>
</dbReference>
<dbReference type="RefSeq" id="XP_001680901.1">
    <property type="nucleotide sequence ID" value="XM_001680849.1"/>
</dbReference>
<dbReference type="SMR" id="Q4QIU7"/>
<dbReference type="STRING" id="5664.Q4QIU7"/>
<dbReference type="EnsemblProtists" id="CAJ02176">
    <property type="protein sequence ID" value="CAJ02176"/>
    <property type="gene ID" value="LMJF_06_1280"/>
</dbReference>
<dbReference type="GeneID" id="5649153"/>
<dbReference type="KEGG" id="lma:LMJF_06_1280"/>
<dbReference type="VEuPathDB" id="TriTrypDB:LmjF.06.1280"/>
<dbReference type="VEuPathDB" id="TriTrypDB:LMJFC_060019900"/>
<dbReference type="VEuPathDB" id="TriTrypDB:LMJLV39_060019700"/>
<dbReference type="VEuPathDB" id="TriTrypDB:LMJSD75_060019800"/>
<dbReference type="eggNOG" id="ENOG502S4T4">
    <property type="taxonomic scope" value="Eukaryota"/>
</dbReference>
<dbReference type="HOGENOM" id="CLU_094839_0_0_1"/>
<dbReference type="InParanoid" id="Q4QIU7"/>
<dbReference type="OMA" id="NPYMKKF"/>
<dbReference type="BRENDA" id="1.3.3.4">
    <property type="organism ID" value="2950"/>
</dbReference>
<dbReference type="UniPathway" id="UPA00251">
    <property type="reaction ID" value="UER00324"/>
</dbReference>
<dbReference type="Proteomes" id="UP000000542">
    <property type="component" value="Chromosome 6"/>
</dbReference>
<dbReference type="GO" id="GO:0016020">
    <property type="term" value="C:membrane"/>
    <property type="evidence" value="ECO:0007669"/>
    <property type="project" value="UniProtKB-SubCell"/>
</dbReference>
<dbReference type="GO" id="GO:0010181">
    <property type="term" value="F:FMN binding"/>
    <property type="evidence" value="ECO:0000314"/>
    <property type="project" value="UniProtKB"/>
</dbReference>
<dbReference type="GO" id="GO:0070819">
    <property type="term" value="F:menaquinone-dependent protoporphyrinogen oxidase activity"/>
    <property type="evidence" value="ECO:0000314"/>
    <property type="project" value="UniProtKB"/>
</dbReference>
<dbReference type="GO" id="GO:0004729">
    <property type="term" value="F:oxygen-dependent protoporphyrinogen oxidase activity"/>
    <property type="evidence" value="ECO:0007669"/>
    <property type="project" value="InterPro"/>
</dbReference>
<dbReference type="GO" id="GO:0006783">
    <property type="term" value="P:heme biosynthetic process"/>
    <property type="evidence" value="ECO:0000314"/>
    <property type="project" value="UniProtKB"/>
</dbReference>
<dbReference type="GO" id="GO:0006782">
    <property type="term" value="P:protoporphyrinogen IX biosynthetic process"/>
    <property type="evidence" value="ECO:0000314"/>
    <property type="project" value="UniProtKB"/>
</dbReference>
<dbReference type="FunFam" id="3.40.50.360:FF:000017">
    <property type="entry name" value="Protoporphyrinogen oxidase (PPO)"/>
    <property type="match status" value="1"/>
</dbReference>
<dbReference type="Gene3D" id="3.40.50.360">
    <property type="match status" value="1"/>
</dbReference>
<dbReference type="HAMAP" id="MF_00853">
    <property type="entry name" value="HemG"/>
    <property type="match status" value="1"/>
</dbReference>
<dbReference type="InterPro" id="IPR026816">
    <property type="entry name" value="Flavodoxin_dom"/>
</dbReference>
<dbReference type="InterPro" id="IPR029039">
    <property type="entry name" value="Flavoprotein-like_sf"/>
</dbReference>
<dbReference type="InterPro" id="IPR044264">
    <property type="entry name" value="HemG"/>
</dbReference>
<dbReference type="InterPro" id="IPR052200">
    <property type="entry name" value="Protoporphyrinogen_IX_DH"/>
</dbReference>
<dbReference type="NCBIfam" id="NF008316">
    <property type="entry name" value="PRK11104.1"/>
    <property type="match status" value="1"/>
</dbReference>
<dbReference type="PANTHER" id="PTHR38030">
    <property type="entry name" value="PROTOPORPHYRINOGEN IX DEHYDROGENASE [MENAQUINONE]"/>
    <property type="match status" value="1"/>
</dbReference>
<dbReference type="PANTHER" id="PTHR38030:SF2">
    <property type="entry name" value="PROTOPORPHYRINOGEN IX DEHYDROGENASE [QUINONE]"/>
    <property type="match status" value="1"/>
</dbReference>
<dbReference type="Pfam" id="PF12724">
    <property type="entry name" value="Flavodoxin_5"/>
    <property type="match status" value="1"/>
</dbReference>
<dbReference type="SUPFAM" id="SSF52218">
    <property type="entry name" value="Flavoproteins"/>
    <property type="match status" value="1"/>
</dbReference>
<keyword id="KW-0285">Flavoprotein</keyword>
<keyword id="KW-0288">FMN</keyword>
<keyword id="KW-0472">Membrane</keyword>
<keyword id="KW-0547">Nucleotide-binding</keyword>
<keyword id="KW-0560">Oxidoreductase</keyword>
<keyword id="KW-0627">Porphyrin biosynthesis</keyword>
<keyword id="KW-1185">Reference proteome</keyword>
<keyword id="KW-0812">Transmembrane</keyword>
<keyword id="KW-1133">Transmembrane helix</keyword>
<reference key="1">
    <citation type="journal article" date="2005" name="Science">
        <title>The genome of the kinetoplastid parasite, Leishmania major.</title>
        <authorList>
            <person name="Ivens A.C."/>
            <person name="Peacock C.S."/>
            <person name="Worthey E.A."/>
            <person name="Murphy L."/>
            <person name="Aggarwal G."/>
            <person name="Berriman M."/>
            <person name="Sisk E."/>
            <person name="Rajandream M.A."/>
            <person name="Adlem E."/>
            <person name="Aert R."/>
            <person name="Anupama A."/>
            <person name="Apostolou Z."/>
            <person name="Attipoe P."/>
            <person name="Bason N."/>
            <person name="Bauser C."/>
            <person name="Beck A."/>
            <person name="Beverley S.M."/>
            <person name="Bianchettin G."/>
            <person name="Borzym K."/>
            <person name="Bothe G."/>
            <person name="Bruschi C.V."/>
            <person name="Collins M."/>
            <person name="Cadag E."/>
            <person name="Ciarloni L."/>
            <person name="Clayton C."/>
            <person name="Coulson R.M.R."/>
            <person name="Cronin A."/>
            <person name="Cruz A.K."/>
            <person name="Davies R.M."/>
            <person name="De Gaudenzi J."/>
            <person name="Dobson D.E."/>
            <person name="Duesterhoeft A."/>
            <person name="Fazelina G."/>
            <person name="Fosker N."/>
            <person name="Frasch A.C."/>
            <person name="Fraser A."/>
            <person name="Fuchs M."/>
            <person name="Gabel C."/>
            <person name="Goble A."/>
            <person name="Goffeau A."/>
            <person name="Harris D."/>
            <person name="Hertz-Fowler C."/>
            <person name="Hilbert H."/>
            <person name="Horn D."/>
            <person name="Huang Y."/>
            <person name="Klages S."/>
            <person name="Knights A."/>
            <person name="Kube M."/>
            <person name="Larke N."/>
            <person name="Litvin L."/>
            <person name="Lord A."/>
            <person name="Louie T."/>
            <person name="Marra M."/>
            <person name="Masuy D."/>
            <person name="Matthews K."/>
            <person name="Michaeli S."/>
            <person name="Mottram J.C."/>
            <person name="Mueller-Auer S."/>
            <person name="Munden H."/>
            <person name="Nelson S."/>
            <person name="Norbertczak H."/>
            <person name="Oliver K."/>
            <person name="O'neil S."/>
            <person name="Pentony M."/>
            <person name="Pohl T.M."/>
            <person name="Price C."/>
            <person name="Purnelle B."/>
            <person name="Quail M.A."/>
            <person name="Rabbinowitsch E."/>
            <person name="Reinhardt R."/>
            <person name="Rieger M."/>
            <person name="Rinta J."/>
            <person name="Robben J."/>
            <person name="Robertson L."/>
            <person name="Ruiz J.C."/>
            <person name="Rutter S."/>
            <person name="Saunders D."/>
            <person name="Schaefer M."/>
            <person name="Schein J."/>
            <person name="Schwartz D.C."/>
            <person name="Seeger K."/>
            <person name="Seyler A."/>
            <person name="Sharp S."/>
            <person name="Shin H."/>
            <person name="Sivam D."/>
            <person name="Squares R."/>
            <person name="Squares S."/>
            <person name="Tosato V."/>
            <person name="Vogt C."/>
            <person name="Volckaert G."/>
            <person name="Wambutt R."/>
            <person name="Warren T."/>
            <person name="Wedler H."/>
            <person name="Woodward J."/>
            <person name="Zhou S."/>
            <person name="Zimmermann W."/>
            <person name="Smith D.F."/>
            <person name="Blackwell J.M."/>
            <person name="Stuart K.D."/>
            <person name="Barrell B.G."/>
            <person name="Myler P.J."/>
        </authorList>
    </citation>
    <scope>NUCLEOTIDE SEQUENCE [LARGE SCALE GENOMIC DNA]</scope>
    <source>
        <strain>MHOM/IL/81/Friedlin</strain>
    </source>
</reference>
<reference key="2">
    <citation type="journal article" date="2011" name="Genome Res.">
        <title>Chromosome and gene copy number variation allow major structural change between species and strains of Leishmania.</title>
        <authorList>
            <person name="Rogers M.B."/>
            <person name="Hilley J.D."/>
            <person name="Dickens N.J."/>
            <person name="Wilkes J."/>
            <person name="Bates P.A."/>
            <person name="Depledge D.P."/>
            <person name="Harris D."/>
            <person name="Her Y."/>
            <person name="Herzyk P."/>
            <person name="Imamura H."/>
            <person name="Otto T.D."/>
            <person name="Sanders M."/>
            <person name="Seeger K."/>
            <person name="Dujardin J.C."/>
            <person name="Berriman M."/>
            <person name="Smith D.F."/>
            <person name="Hertz-Fowler C."/>
            <person name="Mottram J.C."/>
        </authorList>
    </citation>
    <scope>NUCLEOTIDE SEQUENCE [LARGE SCALE GENOMIC DNA]</scope>
    <source>
        <strain>MHOM/IL/81/Friedlin</strain>
    </source>
</reference>
<reference key="3">
    <citation type="journal article" date="2016" name="PLoS Negl. Trop. Dis.">
        <title>The Dynamics of Lateral Gene Transfer in Genus Leishmania - A Route for Adaptation and Species Diversification.</title>
        <authorList>
            <person name="Vikeved E."/>
            <person name="Backlund A."/>
            <person name="Alsmark C."/>
        </authorList>
    </citation>
    <scope>NUCLEOTIDE SEQUENCE [LARGE SCALE GENOMIC DNA]</scope>
    <source>
        <strain>L1989/05</strain>
    </source>
</reference>
<reference key="4">
    <citation type="journal article" date="2014" name="Biosci. Rep.">
        <title>Leishmania major possesses a unique HemG-type protoporphyrinogen IX oxidase.</title>
        <authorList>
            <person name="Zwerschke D."/>
            <person name="Karrie S."/>
            <person name="Jahn D."/>
            <person name="Jahn M."/>
        </authorList>
    </citation>
    <scope>FUNCTION</scope>
    <scope>EXPRESSION IN E.COLI</scope>
    <scope>COFACTOR</scope>
    <scope>PATHWAY</scope>
    <scope>MUTAGENESIS OF TYR-134; TYR-137 AND ARG-142</scope>
</reference>